<evidence type="ECO:0000250" key="1"/>
<evidence type="ECO:0000250" key="2">
    <source>
        <dbReference type="UniProtKB" id="Q16820"/>
    </source>
</evidence>
<evidence type="ECO:0000250" key="3">
    <source>
        <dbReference type="UniProtKB" id="Q61847"/>
    </source>
</evidence>
<evidence type="ECO:0000255" key="4"/>
<evidence type="ECO:0000255" key="5">
    <source>
        <dbReference type="PROSITE-ProRule" id="PRU00076"/>
    </source>
</evidence>
<evidence type="ECO:0000255" key="6">
    <source>
        <dbReference type="PROSITE-ProRule" id="PRU00128"/>
    </source>
</evidence>
<evidence type="ECO:0000255" key="7">
    <source>
        <dbReference type="PROSITE-ProRule" id="PRU00129"/>
    </source>
</evidence>
<evidence type="ECO:0000255" key="8">
    <source>
        <dbReference type="PROSITE-ProRule" id="PRU01211"/>
    </source>
</evidence>
<evidence type="ECO:0000269" key="9">
    <source>
    </source>
</evidence>
<evidence type="ECO:0000305" key="10"/>
<name>MEP1B_RAT</name>
<proteinExistence type="evidence at protein level"/>
<organism>
    <name type="scientific">Rattus norvegicus</name>
    <name type="common">Rat</name>
    <dbReference type="NCBI Taxonomy" id="10116"/>
    <lineage>
        <taxon>Eukaryota</taxon>
        <taxon>Metazoa</taxon>
        <taxon>Chordata</taxon>
        <taxon>Craniata</taxon>
        <taxon>Vertebrata</taxon>
        <taxon>Euteleostomi</taxon>
        <taxon>Mammalia</taxon>
        <taxon>Eutheria</taxon>
        <taxon>Euarchontoglires</taxon>
        <taxon>Glires</taxon>
        <taxon>Rodentia</taxon>
        <taxon>Myomorpha</taxon>
        <taxon>Muroidea</taxon>
        <taxon>Muridae</taxon>
        <taxon>Murinae</taxon>
        <taxon>Rattus</taxon>
    </lineage>
</organism>
<accession>P28826</accession>
<accession>Q642D0</accession>
<gene>
    <name type="primary">Mep1b</name>
</gene>
<keyword id="KW-1003">Cell membrane</keyword>
<keyword id="KW-0903">Direct protein sequencing</keyword>
<keyword id="KW-1015">Disulfide bond</keyword>
<keyword id="KW-0245">EGF-like domain</keyword>
<keyword id="KW-0325">Glycoprotein</keyword>
<keyword id="KW-0378">Hydrolase</keyword>
<keyword id="KW-0395">Inflammatory response</keyword>
<keyword id="KW-0472">Membrane</keyword>
<keyword id="KW-0479">Metal-binding</keyword>
<keyword id="KW-0482">Metalloprotease</keyword>
<keyword id="KW-0597">Phosphoprotein</keyword>
<keyword id="KW-0645">Protease</keyword>
<keyword id="KW-1185">Reference proteome</keyword>
<keyword id="KW-0964">Secreted</keyword>
<keyword id="KW-0732">Signal</keyword>
<keyword id="KW-0812">Transmembrane</keyword>
<keyword id="KW-1133">Transmembrane helix</keyword>
<keyword id="KW-0862">Zinc</keyword>
<keyword id="KW-0865">Zymogen</keyword>
<sequence>MDARHWPWFLVFATFLLVSGLPAPEKFVKDIDGGIDQDIFDINEDLGLDLFEGDIKLEASGRNSIIGDNYRWPHTIPYVLEDSLEMNAKGVILNAFERYRLKTCIDFKPWSGEENYISVFKGSGCWSSVGNIHAGKQELSIGTNCDRIATVQHEFLHALGFWHEQSRADRDDYITIVWDRILSGKEHNFNIYNDSVSDSLNVPYDYTSVMHYSKTAFQNGTESTIITKISDFEDVIGQRMDFSDYDLLKLNQLYSCTSSLSFMDSCDFELENICGMIQSSQDSADWQRLSQVLSGPENDHSNMGQCKDSGFFMHFNTSTGNGGVTAMLESRVLYPKRGFQCVEFYLYNSGSGNGQLNVYTREYTAGHQDGVLTLQREIRDIPTGSWQLYYVTLQVTEKFRVVFEGVGGPGASSGGLSIDDINLSETRCPHHIWHIQNFTQLLGGQTTVYSPPFYSSKGYAFQINLDLTSPTNVGLYFHLISGANDDQLQWPCPWQQATMTLLDQNPDIRQRMSNQRSITTDPKMTDDNGSYLWDRPSKVGVEAFFPNGTQFSRGRGYGTSVFITQERLKSREFLKGDDVYILLTVEDISHLNSTAAVPGPVPTTSTVHNACSEVECQNGGICTLQEGRAECKCPAGEDWWYMGKRCEKRGSTKDTIVIAVSSTVTVFAVMLIITLISVYCTRRKYRKKASAKTAAMNLENQHAF</sequence>
<protein>
    <recommendedName>
        <fullName>Meprin A subunit beta</fullName>
        <ecNumber>3.4.24.63</ecNumber>
    </recommendedName>
    <alternativeName>
        <fullName>Endopeptidase-2</fullName>
    </alternativeName>
    <alternativeName>
        <fullName>Meprin B</fullName>
    </alternativeName>
</protein>
<comment type="function">
    <text evidence="3">Membrane metallopeptidase that sheds many membrane-bound proteins. Exhibits a strong preference for acidic amino acids at the P1' position. Known substrates include: FGF19, VGFA, IL1B, IL18, procollagen I and III, E-cadherin, KLK7, gastrin, ADAM10, tenascin-C. The presence of several pro-inflammatory cytokine among substrates implicate MEP1B in inflammation. It is also involved in tissue remodeling due to its capability to degrade extracellular matrix components.</text>
</comment>
<comment type="catalytic activity">
    <reaction evidence="3">
        <text>Hydrolysis of proteins, including azocasein, and peptides. Hydrolysis of 5-His-|-Leu-6, 6-Leu-|-Cys-7, 14-Ala-|-Leu-15 and 19-Cys-|-Gly-20 bonds in insulin B chain.</text>
        <dbReference type="EC" id="3.4.24.63"/>
    </reaction>
</comment>
<comment type="cofactor">
    <cofactor evidence="8">
        <name>Zn(2+)</name>
        <dbReference type="ChEBI" id="CHEBI:29105"/>
    </cofactor>
    <text evidence="8">Binds 1 zinc ion per subunit.</text>
</comment>
<comment type="activity regulation">
    <text evidence="1">Strongly inhibited by fetuin-A/AHSG.</text>
</comment>
<comment type="subunit">
    <text evidence="2 3">Homotetramer consisting of disulfide-linked beta subunits, or heterotetramer of two alpha and two beta subunits formed by non-covalent association of two disulfide-linked heterodimers. Interacts with MBL2 through its carbohydrate moiety. This interaction may inhibit its catalytic activity (By similarity). Interacts with TSPAN8 (By similarity).</text>
</comment>
<comment type="subcellular location">
    <subcellularLocation>
        <location evidence="2">Cell membrane</location>
        <topology evidence="2">Single-pass type I membrane protein</topology>
    </subcellularLocation>
    <subcellularLocation>
        <location evidence="2">Secreted</location>
    </subcellularLocation>
    <text evidence="2">Homodimers are essentially membrane bound but may also be shed from the surface by ADAM-10 and ADAM-17.</text>
</comment>
<comment type="tissue specificity">
    <text>Kidney, intestinal brush borders and salivary ducts.</text>
</comment>
<comment type="PTM">
    <text evidence="1">N-glycosylated; contains high mannose and/or complex biantennary structures.</text>
</comment>
<comment type="PTM">
    <text evidence="1">Proteolytically activated by trypsin in the intestinal lumen and kallikrein-related peptidases in other tissues.</text>
</comment>
<comment type="PTM">
    <text evidence="2">Phosphorylated by PKC at multiple sites of its cytoplasmic part. Phosphorylation dcreases activity at the cell surface, leading to diminished substrate cleavage.</text>
</comment>
<feature type="signal peptide" evidence="4">
    <location>
        <begin position="1"/>
        <end position="20"/>
    </location>
</feature>
<feature type="propeptide" id="PRO_0000028887">
    <location>
        <begin position="21"/>
        <end position="64"/>
    </location>
</feature>
<feature type="chain" id="PRO_0000028888" description="Meprin A subunit beta">
    <location>
        <begin position="65"/>
        <end position="704"/>
    </location>
</feature>
<feature type="topological domain" description="Extracellular" evidence="4">
    <location>
        <begin position="21"/>
        <end position="654"/>
    </location>
</feature>
<feature type="transmembrane region" description="Helical" evidence="4">
    <location>
        <begin position="655"/>
        <end position="678"/>
    </location>
</feature>
<feature type="topological domain" description="Cytoplasmic" evidence="4">
    <location>
        <begin position="679"/>
        <end position="704"/>
    </location>
</feature>
<feature type="domain" description="Peptidase M12A" evidence="8">
    <location>
        <begin position="63"/>
        <end position="257"/>
    </location>
</feature>
<feature type="domain" description="MAM" evidence="6">
    <location>
        <begin position="261"/>
        <end position="430"/>
    </location>
</feature>
<feature type="domain" description="MATH" evidence="7">
    <location>
        <begin position="431"/>
        <end position="585"/>
    </location>
</feature>
<feature type="domain" description="EGF-like" evidence="5">
    <location>
        <begin position="607"/>
        <end position="647"/>
    </location>
</feature>
<feature type="active site" evidence="8">
    <location>
        <position position="154"/>
    </location>
</feature>
<feature type="binding site" evidence="8">
    <location>
        <position position="153"/>
    </location>
    <ligand>
        <name>Zn(2+)</name>
        <dbReference type="ChEBI" id="CHEBI:29105"/>
        <note>catalytic</note>
    </ligand>
</feature>
<feature type="binding site" evidence="8">
    <location>
        <position position="157"/>
    </location>
    <ligand>
        <name>Zn(2+)</name>
        <dbReference type="ChEBI" id="CHEBI:29105"/>
        <note>catalytic</note>
    </ligand>
</feature>
<feature type="binding site" evidence="8">
    <location>
        <position position="163"/>
    </location>
    <ligand>
        <name>Zn(2+)</name>
        <dbReference type="ChEBI" id="CHEBI:29105"/>
        <note>catalytic</note>
    </ligand>
</feature>
<feature type="site" description="Mediates preference for acidic residues at subsite P1'" evidence="1">
    <location>
        <position position="239"/>
    </location>
</feature>
<feature type="modified residue" description="Phosphothreonine" evidence="2">
    <location>
        <position position="693"/>
    </location>
</feature>
<feature type="glycosylation site" description="N-linked (GlcNAc...) asparagine" evidence="4">
    <location>
        <position position="193"/>
    </location>
</feature>
<feature type="glycosylation site" description="N-linked (GlcNAc...) asparagine" evidence="4">
    <location>
        <position position="219"/>
    </location>
</feature>
<feature type="glycosylation site" description="N-linked (GlcNAc...) asparagine" evidence="4">
    <location>
        <position position="316"/>
    </location>
</feature>
<feature type="glycosylation site" description="N-linked (GlcNAc...) asparagine" evidence="4">
    <location>
        <position position="422"/>
    </location>
</feature>
<feature type="glycosylation site" description="N-linked (GlcNAc...) asparagine" evidence="4">
    <location>
        <position position="437"/>
    </location>
</feature>
<feature type="glycosylation site" description="N-linked (GlcNAc...) asparagine" evidence="4">
    <location>
        <position position="528"/>
    </location>
</feature>
<feature type="glycosylation site" description="N-linked (GlcNAc...) asparagine" evidence="4">
    <location>
        <position position="547"/>
    </location>
</feature>
<feature type="glycosylation site" description="N-linked (GlcNAc...) asparagine" evidence="4">
    <location>
        <position position="592"/>
    </location>
</feature>
<feature type="disulfide bond" evidence="8 9">
    <location>
        <begin position="104"/>
        <end position="256"/>
    </location>
</feature>
<feature type="disulfide bond" evidence="8 9">
    <location>
        <begin position="125"/>
        <end position="145"/>
    </location>
</feature>
<feature type="disulfide bond" evidence="5 9">
    <location>
        <begin position="266"/>
        <end position="428"/>
    </location>
</feature>
<feature type="disulfide bond" description="Interchain" evidence="5 9">
    <location>
        <position position="274"/>
    </location>
</feature>
<feature type="disulfide bond" description="Interchain" evidence="5 9">
    <location>
        <position position="306"/>
    </location>
</feature>
<feature type="disulfide bond" description="Interchain" evidence="5 9">
    <location>
        <position position="492"/>
    </location>
</feature>
<feature type="disulfide bond" evidence="5">
    <location>
        <begin position="611"/>
        <end position="622"/>
    </location>
</feature>
<feature type="disulfide bond" evidence="5">
    <location>
        <begin position="616"/>
        <end position="631"/>
    </location>
</feature>
<feature type="disulfide bond" evidence="5">
    <location>
        <begin position="633"/>
        <end position="646"/>
    </location>
</feature>
<feature type="mutagenesis site" description="Predominantly occurs as a monomer, less than 10% occurs as dimer." evidence="9">
    <original>C</original>
    <variation>A</variation>
    <location>
        <position position="274"/>
    </location>
</feature>
<feature type="mutagenesis site" description="Only occurs as a monomer." evidence="9">
    <original>C</original>
    <variation>A</variation>
    <location>
        <position position="306"/>
    </location>
</feature>
<feature type="mutagenesis site" description="Only occurs as a monomer." evidence="9">
    <original>C</original>
    <variation>A</variation>
    <location>
        <position position="492"/>
    </location>
</feature>
<feature type="sequence conflict" description="In Ref. 1; AAA41587." evidence="10" ref="1">
    <original>V</original>
    <variation>I</variation>
    <location>
        <position position="324"/>
    </location>
</feature>
<reference key="1">
    <citation type="journal article" date="1992" name="J. Biol. Chem.">
        <title>Cloning a rat meprin cDNA reveals the enzyme is a heterodimer.</title>
        <authorList>
            <person name="Johnson G.D."/>
            <person name="Hersh L.B."/>
        </authorList>
    </citation>
    <scope>NUCLEOTIDE SEQUENCE [MRNA]</scope>
    <scope>PARTIAL PROTEIN SEQUENCE</scope>
    <scope>RETRACTED PAPER</scope>
    <source>
        <strain>Sprague-Dawley</strain>
        <tissue>Kidney</tissue>
    </source>
</reference>
<reference key="2">
    <citation type="journal article" date="1993" name="J. Biol. Chem.">
        <authorList>
            <person name="Johnson G.D."/>
            <person name="Hersh L.B."/>
        </authorList>
    </citation>
    <scope>ERRATUM OF PUBMED:1377685</scope>
    <scope>RETRACTION NOTICE OF PUBMED:1377685</scope>
</reference>
<reference key="3">
    <citation type="submission" date="2005-07" db="EMBL/GenBank/DDBJ databases">
        <authorList>
            <person name="Mural R.J."/>
            <person name="Adams M.D."/>
            <person name="Myers E.W."/>
            <person name="Smith H.O."/>
            <person name="Venter J.C."/>
        </authorList>
    </citation>
    <scope>NUCLEOTIDE SEQUENCE [LARGE SCALE GENOMIC DNA]</scope>
</reference>
<reference key="4">
    <citation type="journal article" date="2004" name="Genome Res.">
        <title>The status, quality, and expansion of the NIH full-length cDNA project: the Mammalian Gene Collection (MGC).</title>
        <authorList>
            <consortium name="The MGC Project Team"/>
        </authorList>
    </citation>
    <scope>NUCLEOTIDE SEQUENCE [LARGE SCALE MRNA]</scope>
    <source>
        <strain>Brown Norway</strain>
        <tissue>Kidney</tissue>
    </source>
</reference>
<reference key="5">
    <citation type="journal article" date="1996" name="Biochem. J.">
        <title>Identification of the cysteine residues implicated in the formation of alpha 2 and alpha/beta dimers of rat meprin.</title>
        <authorList>
            <person name="Chevallier S."/>
            <person name="Ahn J."/>
            <person name="Boileau G."/>
            <person name="Crine P."/>
        </authorList>
    </citation>
    <scope>INTERCHAIN DISULFIDE BOND</scope>
</reference>
<reference key="6">
    <citation type="journal article" date="2005" name="J. Biol. Chem.">
        <title>Intersubunit and domain interactions of the meprin B metalloproteinase. Disulfide bonds and protein-protein interactions in the MAM and TRAF domains.</title>
        <authorList>
            <person name="Ishmael F.T."/>
            <person name="Shier V.K."/>
            <person name="Ishmael S.S."/>
            <person name="Bond J.S."/>
        </authorList>
    </citation>
    <scope>DISULFIDE BONDS</scope>
    <scope>MUTAGENESIS OF CYS-274; CYS-306 AND CYS-492</scope>
</reference>
<dbReference type="EC" id="3.4.24.63"/>
<dbReference type="EMBL" id="M88601">
    <property type="protein sequence ID" value="AAA41587.1"/>
    <property type="molecule type" value="mRNA"/>
</dbReference>
<dbReference type="EMBL" id="CH473974">
    <property type="protein sequence ID" value="EDL76105.1"/>
    <property type="molecule type" value="Genomic_DNA"/>
</dbReference>
<dbReference type="EMBL" id="BC081833">
    <property type="protein sequence ID" value="AAH81833.1"/>
    <property type="molecule type" value="mRNA"/>
</dbReference>
<dbReference type="PIR" id="A42908">
    <property type="entry name" value="A42908"/>
</dbReference>
<dbReference type="RefSeq" id="NP_037315.2">
    <property type="nucleotide sequence ID" value="NM_013183.3"/>
</dbReference>
<dbReference type="SMR" id="P28826"/>
<dbReference type="BioGRID" id="247756">
    <property type="interactions" value="2"/>
</dbReference>
<dbReference type="FunCoup" id="P28826">
    <property type="interactions" value="110"/>
</dbReference>
<dbReference type="STRING" id="10116.ENSRNOP00000063916"/>
<dbReference type="MEROPS" id="M12.004"/>
<dbReference type="GlyCosmos" id="P28826">
    <property type="glycosylation" value="8 sites, No reported glycans"/>
</dbReference>
<dbReference type="GlyGen" id="P28826">
    <property type="glycosylation" value="8 sites"/>
</dbReference>
<dbReference type="PhosphoSitePlus" id="P28826"/>
<dbReference type="PaxDb" id="10116-ENSRNOP00000063916"/>
<dbReference type="GeneID" id="25727"/>
<dbReference type="KEGG" id="rno:25727"/>
<dbReference type="AGR" id="RGD:3081"/>
<dbReference type="CTD" id="4225"/>
<dbReference type="RGD" id="3081">
    <property type="gene designation" value="Mep1b"/>
</dbReference>
<dbReference type="VEuPathDB" id="HostDB:ENSRNOG00000049345"/>
<dbReference type="eggNOG" id="KOG3714">
    <property type="taxonomic scope" value="Eukaryota"/>
</dbReference>
<dbReference type="HOGENOM" id="CLU_021966_0_0_1"/>
<dbReference type="InParanoid" id="P28826"/>
<dbReference type="OrthoDB" id="60982at9989"/>
<dbReference type="PhylomeDB" id="P28826"/>
<dbReference type="BRENDA" id="3.4.24.63">
    <property type="organism ID" value="5301"/>
</dbReference>
<dbReference type="PRO" id="PR:P28826"/>
<dbReference type="Proteomes" id="UP000002494">
    <property type="component" value="Chromosome 18"/>
</dbReference>
<dbReference type="Proteomes" id="UP000234681">
    <property type="component" value="Chromosome 18"/>
</dbReference>
<dbReference type="Bgee" id="ENSRNOG00000049345">
    <property type="expression patterns" value="Expressed in jejunum and 9 other cell types or tissues"/>
</dbReference>
<dbReference type="GO" id="GO:0005576">
    <property type="term" value="C:extracellular region"/>
    <property type="evidence" value="ECO:0007669"/>
    <property type="project" value="UniProtKB-SubCell"/>
</dbReference>
<dbReference type="GO" id="GO:0016020">
    <property type="term" value="C:membrane"/>
    <property type="evidence" value="ECO:0000266"/>
    <property type="project" value="RGD"/>
</dbReference>
<dbReference type="GO" id="GO:0017090">
    <property type="term" value="C:meprin A complex"/>
    <property type="evidence" value="ECO:0000266"/>
    <property type="project" value="RGD"/>
</dbReference>
<dbReference type="GO" id="GO:0005886">
    <property type="term" value="C:plasma membrane"/>
    <property type="evidence" value="ECO:0000266"/>
    <property type="project" value="RGD"/>
</dbReference>
<dbReference type="GO" id="GO:0042802">
    <property type="term" value="F:identical protein binding"/>
    <property type="evidence" value="ECO:0000266"/>
    <property type="project" value="RGD"/>
</dbReference>
<dbReference type="GO" id="GO:0004222">
    <property type="term" value="F:metalloendopeptidase activity"/>
    <property type="evidence" value="ECO:0000314"/>
    <property type="project" value="RGD"/>
</dbReference>
<dbReference type="GO" id="GO:0008270">
    <property type="term" value="F:zinc ion binding"/>
    <property type="evidence" value="ECO:0007669"/>
    <property type="project" value="InterPro"/>
</dbReference>
<dbReference type="GO" id="GO:0006954">
    <property type="term" value="P:inflammatory response"/>
    <property type="evidence" value="ECO:0007669"/>
    <property type="project" value="UniProtKB-KW"/>
</dbReference>
<dbReference type="GO" id="GO:0006508">
    <property type="term" value="P:proteolysis"/>
    <property type="evidence" value="ECO:0000303"/>
    <property type="project" value="RGD"/>
</dbReference>
<dbReference type="CDD" id="cd00054">
    <property type="entry name" value="EGF_CA"/>
    <property type="match status" value="1"/>
</dbReference>
<dbReference type="CDD" id="cd06263">
    <property type="entry name" value="MAM"/>
    <property type="match status" value="1"/>
</dbReference>
<dbReference type="FunFam" id="2.10.25.10:FF:000363">
    <property type="entry name" value="Meprin A subunit"/>
    <property type="match status" value="1"/>
</dbReference>
<dbReference type="FunFam" id="2.60.120.200:FF:000037">
    <property type="entry name" value="Meprin A subunit"/>
    <property type="match status" value="1"/>
</dbReference>
<dbReference type="FunFam" id="2.60.210.10:FF:000009">
    <property type="entry name" value="Meprin A subunit"/>
    <property type="match status" value="1"/>
</dbReference>
<dbReference type="FunFam" id="3.40.390.10:FF:000015">
    <property type="entry name" value="Meprin A subunit"/>
    <property type="match status" value="1"/>
</dbReference>
<dbReference type="Gene3D" id="2.60.120.200">
    <property type="match status" value="1"/>
</dbReference>
<dbReference type="Gene3D" id="2.60.210.10">
    <property type="entry name" value="Apoptosis, Tumor Necrosis Factor Receptor Associated Protein 2, Chain A"/>
    <property type="match status" value="1"/>
</dbReference>
<dbReference type="Gene3D" id="3.40.390.10">
    <property type="entry name" value="Collagenase (Catalytic Domain)"/>
    <property type="match status" value="1"/>
</dbReference>
<dbReference type="Gene3D" id="2.10.25.10">
    <property type="entry name" value="Laminin"/>
    <property type="match status" value="1"/>
</dbReference>
<dbReference type="InterPro" id="IPR013320">
    <property type="entry name" value="ConA-like_dom_sf"/>
</dbReference>
<dbReference type="InterPro" id="IPR000742">
    <property type="entry name" value="EGF-like_dom"/>
</dbReference>
<dbReference type="InterPro" id="IPR000998">
    <property type="entry name" value="MAM_dom"/>
</dbReference>
<dbReference type="InterPro" id="IPR002083">
    <property type="entry name" value="MATH/TRAF_dom"/>
</dbReference>
<dbReference type="InterPro" id="IPR008294">
    <property type="entry name" value="Meprin"/>
</dbReference>
<dbReference type="InterPro" id="IPR024079">
    <property type="entry name" value="MetalloPept_cat_dom_sf"/>
</dbReference>
<dbReference type="InterPro" id="IPR001506">
    <property type="entry name" value="Peptidase_M12A"/>
</dbReference>
<dbReference type="InterPro" id="IPR006026">
    <property type="entry name" value="Peptidase_Metallo"/>
</dbReference>
<dbReference type="InterPro" id="IPR008974">
    <property type="entry name" value="TRAF-like"/>
</dbReference>
<dbReference type="PANTHER" id="PTHR10127">
    <property type="entry name" value="DISCOIDIN, CUB, EGF, LAMININ , AND ZINC METALLOPROTEASE DOMAIN CONTAINING"/>
    <property type="match status" value="1"/>
</dbReference>
<dbReference type="PANTHER" id="PTHR10127:SF814">
    <property type="entry name" value="MEPRIN A SUBUNIT BETA"/>
    <property type="match status" value="1"/>
</dbReference>
<dbReference type="Pfam" id="PF01400">
    <property type="entry name" value="Astacin"/>
    <property type="match status" value="1"/>
</dbReference>
<dbReference type="Pfam" id="PF00629">
    <property type="entry name" value="MAM"/>
    <property type="match status" value="1"/>
</dbReference>
<dbReference type="Pfam" id="PF22486">
    <property type="entry name" value="MATH_2"/>
    <property type="match status" value="1"/>
</dbReference>
<dbReference type="PIRSF" id="PIRSF001196">
    <property type="entry name" value="Meprin"/>
    <property type="match status" value="1"/>
</dbReference>
<dbReference type="PRINTS" id="PR00480">
    <property type="entry name" value="ASTACIN"/>
</dbReference>
<dbReference type="PRINTS" id="PR00020">
    <property type="entry name" value="MAMDOMAIN"/>
</dbReference>
<dbReference type="SMART" id="SM00137">
    <property type="entry name" value="MAM"/>
    <property type="match status" value="1"/>
</dbReference>
<dbReference type="SMART" id="SM00061">
    <property type="entry name" value="MATH"/>
    <property type="match status" value="1"/>
</dbReference>
<dbReference type="SMART" id="SM00235">
    <property type="entry name" value="ZnMc"/>
    <property type="match status" value="1"/>
</dbReference>
<dbReference type="SUPFAM" id="SSF49899">
    <property type="entry name" value="Concanavalin A-like lectins/glucanases"/>
    <property type="match status" value="1"/>
</dbReference>
<dbReference type="SUPFAM" id="SSF55486">
    <property type="entry name" value="Metalloproteases ('zincins'), catalytic domain"/>
    <property type="match status" value="1"/>
</dbReference>
<dbReference type="SUPFAM" id="SSF49599">
    <property type="entry name" value="TRAF domain-like"/>
    <property type="match status" value="1"/>
</dbReference>
<dbReference type="PROSITE" id="PS51864">
    <property type="entry name" value="ASTACIN"/>
    <property type="match status" value="1"/>
</dbReference>
<dbReference type="PROSITE" id="PS50026">
    <property type="entry name" value="EGF_3"/>
    <property type="match status" value="1"/>
</dbReference>
<dbReference type="PROSITE" id="PS00740">
    <property type="entry name" value="MAM_1"/>
    <property type="match status" value="1"/>
</dbReference>
<dbReference type="PROSITE" id="PS50060">
    <property type="entry name" value="MAM_2"/>
    <property type="match status" value="1"/>
</dbReference>
<dbReference type="PROSITE" id="PS50144">
    <property type="entry name" value="MATH"/>
    <property type="match status" value="1"/>
</dbReference>
<dbReference type="PROSITE" id="PS00142">
    <property type="entry name" value="ZINC_PROTEASE"/>
    <property type="match status" value="1"/>
</dbReference>